<accession>Q13474</accession>
<accession>A6ZKI5</accession>
<accession>A8K1B0</accession>
<accession>B1B1F3</accession>
<accession>B4DIZ0</accession>
<evidence type="ECO:0000250" key="1"/>
<evidence type="ECO:0000250" key="2">
    <source>
        <dbReference type="UniProtKB" id="Q05AA6"/>
    </source>
</evidence>
<evidence type="ECO:0000250" key="3">
    <source>
        <dbReference type="UniProtKB" id="Q9EPA0"/>
    </source>
</evidence>
<evidence type="ECO:0000255" key="4">
    <source>
        <dbReference type="PROSITE-ProRule" id="PRU00224"/>
    </source>
</evidence>
<evidence type="ECO:0000255" key="5">
    <source>
        <dbReference type="PROSITE-ProRule" id="PRU00228"/>
    </source>
</evidence>
<evidence type="ECO:0000256" key="6">
    <source>
        <dbReference type="SAM" id="MobiDB-lite"/>
    </source>
</evidence>
<evidence type="ECO:0000269" key="7">
    <source>
    </source>
</evidence>
<evidence type="ECO:0000303" key="8">
    <source>
    </source>
</evidence>
<evidence type="ECO:0000305" key="9"/>
<comment type="function">
    <text evidence="1 2">Required for normal myelination and for normal organization of the cytoplasm and the formation of Cajal bands in myelinating Schwann cells. Required for normal PRX location at appositions between the abaxonal surface of the myelin sheath and the Schwann cell plasma membrane. Possibly involved in membrane-cytoskeleton interactions of the central nervous system.</text>
</comment>
<comment type="subunit">
    <text evidence="2">Interacts with PRX; this enhances phosphorylation. Identified in a dystroglycan complex that contains at least PRX, DRP2, UTRN, DMD and DAG1.</text>
</comment>
<comment type="subcellular location">
    <subcellularLocation>
        <location evidence="3">Postsynaptic density</location>
    </subcellularLocation>
    <subcellularLocation>
        <location evidence="3">Cell projection</location>
        <location evidence="3">Dendrite</location>
    </subcellularLocation>
    <subcellularLocation>
        <location evidence="3">Perikaryon</location>
    </subcellularLocation>
    <subcellularLocation>
        <location evidence="2">Cell membrane</location>
        <topology evidence="2">Peripheral membrane protein</topology>
    </subcellularLocation>
    <text evidence="2">Detected in Schwann cells at periaxonal myelin membranes.</text>
</comment>
<comment type="alternative products">
    <event type="alternative splicing"/>
    <isoform>
        <id>Q13474-1</id>
        <name>1</name>
        <sequence type="displayed"/>
    </isoform>
    <isoform>
        <id>Q13474-2</id>
        <name>2</name>
        <sequence type="described" ref="VSP_042662"/>
    </isoform>
</comment>
<comment type="tissue specificity">
    <text evidence="7">Detected in fetal brain.</text>
</comment>
<comment type="sequence caution" evidence="9">
    <conflict type="erroneous initiation">
        <sequence resource="EMBL-CDS" id="AAC50538"/>
    </conflict>
</comment>
<comment type="sequence caution" evidence="9">
    <conflict type="erroneous initiation">
        <sequence resource="EMBL-CDS" id="AAI11696"/>
    </conflict>
</comment>
<comment type="sequence caution" evidence="9">
    <conflict type="erroneous initiation">
        <sequence resource="EMBL-CDS" id="BAF82514"/>
    </conflict>
</comment>
<sequence length="957" mass="107962">MQPMVMQGCPYTLPRCHDWQAADQFHHSSSLRSTCPHPQVRAAVTSPAPPQDGAGVPCLSLKLLNGSVGASGPLEPPAMNLCWNEIKKKSHNLRARLEAFSDHSGKLQLPLQEIIDWLSQKDEELSAQLPLQGDVALVQQEKETHAAFMEEVKSRGPYIYSVLESAQAFLSQHPFEELEEPHSESKDTSPKQRIQNLSRFVWKQATVASELWEKLTARCVDQHRHIERTLEQLLEIQGAMEELSTTLSQAEGVRATWEPIGDLFIDSLPEHIQAIKLFKEEFSPMKDGVKLVNDLAHQLAISDVHLSMENSQALEQINVRWKQLQASVSERLKQLQDAHRDFGPGSQHFLSSSVQVPWERAISPNKVPYYINHQAQTTCWDHPKMTELYQTLADLNNIKFSAYRTAMKLRRVQKALRLDLVTLTTALEIFNEHDLQASEHVMDVVEVIHCLTALYERLEEERGILVNVPLCVDMSLNWLLNVFDSGRSGKMRALSFKTGIACLCGTEVKEKLQYLFSQVANSGSQCDQRHLGVLLHEAIQVPRQLGEVAAFGGSNVEPSVRSCFRFSTGKPVIEASQFLEWVNLEPQSMVWLAVLHRVTIAEQVKHQTKCSICRQCPIKGFRYRSLKQFNVDICQTCFLTGRASKGNKLHYPIMEYYTPTTSSENMRDFATTLKNKFRSKHYFSKHPQRGYLPVQSVLEADYSETPASSPMWPHADTHSRIEHFASRLAEMESQNCSFFNDSLSPDDSIDEDQYLLRHSSPITDREPAFGQQAPCSVATESKGELQKILAHLEDENRILQGELRRLKWQHEEAAEAPSLADGSTEAATDHRNEELLAEARILRQHKSRLETRMQILEDHNKQLESQLQRLRELLLQPPTESDGSGSAGSSLASSPQQSEGSHPREKGQTTPDTEAADDVGSKSQDVSLCLEDIMEKLRHAFPSVRSSDVTANTLLAS</sequence>
<dbReference type="EMBL" id="U43519">
    <property type="protein sequence ID" value="AAC50538.1"/>
    <property type="status" value="ALT_INIT"/>
    <property type="molecule type" value="mRNA"/>
</dbReference>
<dbReference type="EMBL" id="AK289825">
    <property type="protein sequence ID" value="BAF82514.1"/>
    <property type="status" value="ALT_INIT"/>
    <property type="molecule type" value="mRNA"/>
</dbReference>
<dbReference type="EMBL" id="AK295843">
    <property type="protein sequence ID" value="BAG58652.1"/>
    <property type="molecule type" value="mRNA"/>
</dbReference>
<dbReference type="EMBL" id="AL022155">
    <property type="status" value="NOT_ANNOTATED_CDS"/>
    <property type="molecule type" value="Genomic_DNA"/>
</dbReference>
<dbReference type="EMBL" id="Z68331">
    <property type="protein sequence ID" value="CAI42016.2"/>
    <property type="molecule type" value="Genomic_DNA"/>
</dbReference>
<dbReference type="EMBL" id="Z70281">
    <property type="protein sequence ID" value="CAI42016.2"/>
    <property type="status" value="JOINED"/>
    <property type="molecule type" value="Genomic_DNA"/>
</dbReference>
<dbReference type="EMBL" id="Z70280">
    <property type="status" value="NOT_ANNOTATED_CDS"/>
    <property type="molecule type" value="Genomic_DNA"/>
</dbReference>
<dbReference type="EMBL" id="Z70281">
    <property type="protein sequence ID" value="CAO03505.1"/>
    <property type="molecule type" value="Genomic_DNA"/>
</dbReference>
<dbReference type="EMBL" id="Z68331">
    <property type="protein sequence ID" value="CAO03505.1"/>
    <property type="status" value="JOINED"/>
    <property type="molecule type" value="Genomic_DNA"/>
</dbReference>
<dbReference type="EMBL" id="CH471115">
    <property type="protein sequence ID" value="EAX02844.1"/>
    <property type="molecule type" value="Genomic_DNA"/>
</dbReference>
<dbReference type="EMBL" id="BC111695">
    <property type="protein sequence ID" value="AAI11696.2"/>
    <property type="status" value="ALT_INIT"/>
    <property type="molecule type" value="mRNA"/>
</dbReference>
<dbReference type="CCDS" id="CCDS14480.2">
    <molecule id="Q13474-1"/>
</dbReference>
<dbReference type="CCDS" id="CCDS55465.1">
    <molecule id="Q13474-2"/>
</dbReference>
<dbReference type="RefSeq" id="NP_001164655.1">
    <molecule id="Q13474-2"/>
    <property type="nucleotide sequence ID" value="NM_001171184.2"/>
</dbReference>
<dbReference type="RefSeq" id="NP_001930.2">
    <molecule id="Q13474-1"/>
    <property type="nucleotide sequence ID" value="NM_001939.3"/>
</dbReference>
<dbReference type="RefSeq" id="XP_047297850.1">
    <molecule id="Q13474-1"/>
    <property type="nucleotide sequence ID" value="XM_047441894.1"/>
</dbReference>
<dbReference type="SMR" id="Q13474"/>
<dbReference type="BioGRID" id="108155">
    <property type="interactions" value="5"/>
</dbReference>
<dbReference type="FunCoup" id="Q13474">
    <property type="interactions" value="240"/>
</dbReference>
<dbReference type="IntAct" id="Q13474">
    <property type="interactions" value="3"/>
</dbReference>
<dbReference type="MINT" id="Q13474"/>
<dbReference type="STRING" id="9606.ENSP00000378635"/>
<dbReference type="GlyGen" id="Q13474">
    <property type="glycosylation" value="4 sites, 1 O-linked glycan (4 sites)"/>
</dbReference>
<dbReference type="iPTMnet" id="Q13474"/>
<dbReference type="PhosphoSitePlus" id="Q13474"/>
<dbReference type="BioMuta" id="DRP2"/>
<dbReference type="DMDM" id="212286371"/>
<dbReference type="jPOST" id="Q13474"/>
<dbReference type="MassIVE" id="Q13474"/>
<dbReference type="PaxDb" id="9606-ENSP00000378635"/>
<dbReference type="PeptideAtlas" id="Q13474"/>
<dbReference type="ProteomicsDB" id="59471">
    <molecule id="Q13474-1"/>
</dbReference>
<dbReference type="ProteomicsDB" id="59472">
    <molecule id="Q13474-2"/>
</dbReference>
<dbReference type="Antibodypedia" id="506">
    <property type="antibodies" value="64 antibodies from 18 providers"/>
</dbReference>
<dbReference type="DNASU" id="1821"/>
<dbReference type="Ensembl" id="ENST00000395209.8">
    <molecule id="Q13474-1"/>
    <property type="protein sequence ID" value="ENSP00000378635.3"/>
    <property type="gene ID" value="ENSG00000102385.13"/>
</dbReference>
<dbReference type="Ensembl" id="ENST00000402866.5">
    <molecule id="Q13474-1"/>
    <property type="protein sequence ID" value="ENSP00000385038.1"/>
    <property type="gene ID" value="ENSG00000102385.13"/>
</dbReference>
<dbReference type="Ensembl" id="ENST00000538510.1">
    <molecule id="Q13474-1"/>
    <property type="protein sequence ID" value="ENSP00000441051.1"/>
    <property type="gene ID" value="ENSG00000102385.13"/>
</dbReference>
<dbReference type="Ensembl" id="ENST00000541709.5">
    <molecule id="Q13474-2"/>
    <property type="protein sequence ID" value="ENSP00000444752.1"/>
    <property type="gene ID" value="ENSG00000102385.13"/>
</dbReference>
<dbReference type="GeneID" id="1821"/>
<dbReference type="KEGG" id="hsa:1821"/>
<dbReference type="MANE-Select" id="ENST00000395209.8">
    <property type="protein sequence ID" value="ENSP00000378635.3"/>
    <property type="RefSeq nucleotide sequence ID" value="NM_001939.3"/>
    <property type="RefSeq protein sequence ID" value="NP_001930.2"/>
</dbReference>
<dbReference type="UCSC" id="uc004egz.3">
    <molecule id="Q13474-1"/>
    <property type="organism name" value="human"/>
</dbReference>
<dbReference type="AGR" id="HGNC:3032"/>
<dbReference type="CTD" id="1821"/>
<dbReference type="DisGeNET" id="1821"/>
<dbReference type="GeneCards" id="DRP2"/>
<dbReference type="GeneReviews" id="DRP2"/>
<dbReference type="HGNC" id="HGNC:3032">
    <property type="gene designation" value="DRP2"/>
</dbReference>
<dbReference type="HPA" id="ENSG00000102385">
    <property type="expression patterns" value="Tissue enhanced (brain, lymphoid tissue)"/>
</dbReference>
<dbReference type="MalaCards" id="DRP2"/>
<dbReference type="MIM" id="300052">
    <property type="type" value="gene"/>
</dbReference>
<dbReference type="neXtProt" id="NX_Q13474"/>
<dbReference type="OpenTargets" id="ENSG00000102385"/>
<dbReference type="PharmGKB" id="PA27486"/>
<dbReference type="VEuPathDB" id="HostDB:ENSG00000102385"/>
<dbReference type="eggNOG" id="KOG4286">
    <property type="taxonomic scope" value="Eukaryota"/>
</dbReference>
<dbReference type="GeneTree" id="ENSGT00940000153467"/>
<dbReference type="HOGENOM" id="CLU_001187_0_0_1"/>
<dbReference type="InParanoid" id="Q13474"/>
<dbReference type="OMA" id="WRAADHF"/>
<dbReference type="OrthoDB" id="10057795at2759"/>
<dbReference type="PAN-GO" id="Q13474">
    <property type="GO annotations" value="2 GO annotations based on evolutionary models"/>
</dbReference>
<dbReference type="PhylomeDB" id="Q13474"/>
<dbReference type="TreeFam" id="TF337303"/>
<dbReference type="PathwayCommons" id="Q13474"/>
<dbReference type="Reactome" id="R-HSA-9619665">
    <property type="pathway name" value="EGR2 and SOX10-mediated initiation of Schwann cell myelination"/>
</dbReference>
<dbReference type="Reactome" id="R-HSA-9913351">
    <property type="pathway name" value="Formation of the dystrophin-glycoprotein complex (DGC)"/>
</dbReference>
<dbReference type="SignaLink" id="Q13474"/>
<dbReference type="BioGRID-ORCS" id="1821">
    <property type="hits" value="10 hits in 771 CRISPR screens"/>
</dbReference>
<dbReference type="ChiTaRS" id="DRP2">
    <property type="organism name" value="human"/>
</dbReference>
<dbReference type="GenomeRNAi" id="1821"/>
<dbReference type="Pharos" id="Q13474">
    <property type="development level" value="Tbio"/>
</dbReference>
<dbReference type="PRO" id="PR:Q13474"/>
<dbReference type="Proteomes" id="UP000005640">
    <property type="component" value="Chromosome X"/>
</dbReference>
<dbReference type="RNAct" id="Q13474">
    <property type="molecule type" value="protein"/>
</dbReference>
<dbReference type="Bgee" id="ENSG00000102385">
    <property type="expression patterns" value="Expressed in trigeminal ganglion and 119 other cell types or tissues"/>
</dbReference>
<dbReference type="ExpressionAtlas" id="Q13474">
    <property type="expression patterns" value="baseline and differential"/>
</dbReference>
<dbReference type="GO" id="GO:0030425">
    <property type="term" value="C:dendrite"/>
    <property type="evidence" value="ECO:0007669"/>
    <property type="project" value="UniProtKB-SubCell"/>
</dbReference>
<dbReference type="GO" id="GO:0098978">
    <property type="term" value="C:glutamatergic synapse"/>
    <property type="evidence" value="ECO:0007669"/>
    <property type="project" value="Ensembl"/>
</dbReference>
<dbReference type="GO" id="GO:0043204">
    <property type="term" value="C:perikaryon"/>
    <property type="evidence" value="ECO:0007669"/>
    <property type="project" value="UniProtKB-SubCell"/>
</dbReference>
<dbReference type="GO" id="GO:0005886">
    <property type="term" value="C:plasma membrane"/>
    <property type="evidence" value="ECO:0000318"/>
    <property type="project" value="GO_Central"/>
</dbReference>
<dbReference type="GO" id="GO:0014069">
    <property type="term" value="C:postsynaptic density"/>
    <property type="evidence" value="ECO:0007669"/>
    <property type="project" value="UniProtKB-SubCell"/>
</dbReference>
<dbReference type="GO" id="GO:0008270">
    <property type="term" value="F:zinc ion binding"/>
    <property type="evidence" value="ECO:0007669"/>
    <property type="project" value="UniProtKB-KW"/>
</dbReference>
<dbReference type="GO" id="GO:0007417">
    <property type="term" value="P:central nervous system development"/>
    <property type="evidence" value="ECO:0000304"/>
    <property type="project" value="ProtInc"/>
</dbReference>
<dbReference type="GO" id="GO:0050808">
    <property type="term" value="P:synapse organization"/>
    <property type="evidence" value="ECO:0007669"/>
    <property type="project" value="Ensembl"/>
</dbReference>
<dbReference type="GO" id="GO:0099536">
    <property type="term" value="P:synaptic signaling"/>
    <property type="evidence" value="ECO:0000318"/>
    <property type="project" value="GO_Central"/>
</dbReference>
<dbReference type="CDD" id="cd16248">
    <property type="entry name" value="EFh_DRP-2"/>
    <property type="match status" value="1"/>
</dbReference>
<dbReference type="CDD" id="cd00176">
    <property type="entry name" value="SPEC"/>
    <property type="match status" value="1"/>
</dbReference>
<dbReference type="CDD" id="cd00201">
    <property type="entry name" value="WW"/>
    <property type="match status" value="1"/>
</dbReference>
<dbReference type="CDD" id="cd02334">
    <property type="entry name" value="ZZ_dystrophin"/>
    <property type="match status" value="1"/>
</dbReference>
<dbReference type="FunFam" id="1.10.238.10:FF:000008">
    <property type="entry name" value="Dystrophin isoform 2"/>
    <property type="match status" value="1"/>
</dbReference>
<dbReference type="FunFam" id="3.30.60.90:FF:000001">
    <property type="entry name" value="Dystrophin isoform 2"/>
    <property type="match status" value="1"/>
</dbReference>
<dbReference type="FunFam" id="1.10.238.10:FF:000023">
    <property type="entry name" value="dystrophin isoform X1"/>
    <property type="match status" value="1"/>
</dbReference>
<dbReference type="FunFam" id="2.20.70.10:FF:000004">
    <property type="entry name" value="dystrophin isoform X1"/>
    <property type="match status" value="1"/>
</dbReference>
<dbReference type="FunFam" id="1.20.58.60:FF:000128">
    <property type="entry name" value="Dystrophin related protein 2"/>
    <property type="match status" value="1"/>
</dbReference>
<dbReference type="FunFam" id="1.20.58.60:FF:000029">
    <property type="entry name" value="utrophin isoform X1"/>
    <property type="match status" value="1"/>
</dbReference>
<dbReference type="Gene3D" id="1.20.58.60">
    <property type="match status" value="2"/>
</dbReference>
<dbReference type="Gene3D" id="2.20.70.10">
    <property type="match status" value="1"/>
</dbReference>
<dbReference type="Gene3D" id="3.30.60.90">
    <property type="match status" value="1"/>
</dbReference>
<dbReference type="Gene3D" id="1.10.238.10">
    <property type="entry name" value="EF-hand"/>
    <property type="match status" value="2"/>
</dbReference>
<dbReference type="InterPro" id="IPR017433">
    <property type="entry name" value="Dystrophin-related_2"/>
</dbReference>
<dbReference type="InterPro" id="IPR011992">
    <property type="entry name" value="EF-hand-dom_pair"/>
</dbReference>
<dbReference type="InterPro" id="IPR015153">
    <property type="entry name" value="EF-hand_dom_typ1"/>
</dbReference>
<dbReference type="InterPro" id="IPR015154">
    <property type="entry name" value="EF-hand_dom_typ2"/>
</dbReference>
<dbReference type="InterPro" id="IPR050774">
    <property type="entry name" value="KCMF1/Dystrophin"/>
</dbReference>
<dbReference type="InterPro" id="IPR018159">
    <property type="entry name" value="Spectrin/alpha-actinin"/>
</dbReference>
<dbReference type="InterPro" id="IPR002017">
    <property type="entry name" value="Spectrin_repeat"/>
</dbReference>
<dbReference type="InterPro" id="IPR001202">
    <property type="entry name" value="WW_dom"/>
</dbReference>
<dbReference type="InterPro" id="IPR036020">
    <property type="entry name" value="WW_dom_sf"/>
</dbReference>
<dbReference type="InterPro" id="IPR000433">
    <property type="entry name" value="Znf_ZZ"/>
</dbReference>
<dbReference type="InterPro" id="IPR043145">
    <property type="entry name" value="Znf_ZZ_sf"/>
</dbReference>
<dbReference type="PANTHER" id="PTHR12268:SF16">
    <property type="entry name" value="DYSTROPHIN-RELATED PROTEIN 2"/>
    <property type="match status" value="1"/>
</dbReference>
<dbReference type="PANTHER" id="PTHR12268">
    <property type="entry name" value="E3 UBIQUITIN-PROTEIN LIGASE KCMF1"/>
    <property type="match status" value="1"/>
</dbReference>
<dbReference type="Pfam" id="PF09068">
    <property type="entry name" value="EF-hand_2"/>
    <property type="match status" value="1"/>
</dbReference>
<dbReference type="Pfam" id="PF09069">
    <property type="entry name" value="EF-hand_3"/>
    <property type="match status" value="1"/>
</dbReference>
<dbReference type="Pfam" id="PF00435">
    <property type="entry name" value="Spectrin"/>
    <property type="match status" value="1"/>
</dbReference>
<dbReference type="Pfam" id="PF00397">
    <property type="entry name" value="WW"/>
    <property type="match status" value="1"/>
</dbReference>
<dbReference type="Pfam" id="PF00569">
    <property type="entry name" value="ZZ"/>
    <property type="match status" value="1"/>
</dbReference>
<dbReference type="PIRSF" id="PIRSF038205">
    <property type="entry name" value="Dystrophin-related_p2"/>
    <property type="match status" value="1"/>
</dbReference>
<dbReference type="SMART" id="SM00150">
    <property type="entry name" value="SPEC"/>
    <property type="match status" value="2"/>
</dbReference>
<dbReference type="SMART" id="SM00456">
    <property type="entry name" value="WW"/>
    <property type="match status" value="1"/>
</dbReference>
<dbReference type="SMART" id="SM00291">
    <property type="entry name" value="ZnF_ZZ"/>
    <property type="match status" value="1"/>
</dbReference>
<dbReference type="SUPFAM" id="SSF47473">
    <property type="entry name" value="EF-hand"/>
    <property type="match status" value="2"/>
</dbReference>
<dbReference type="SUPFAM" id="SSF57850">
    <property type="entry name" value="RING/U-box"/>
    <property type="match status" value="1"/>
</dbReference>
<dbReference type="SUPFAM" id="SSF46966">
    <property type="entry name" value="Spectrin repeat"/>
    <property type="match status" value="2"/>
</dbReference>
<dbReference type="SUPFAM" id="SSF51045">
    <property type="entry name" value="WW domain"/>
    <property type="match status" value="1"/>
</dbReference>
<dbReference type="PROSITE" id="PS01159">
    <property type="entry name" value="WW_DOMAIN_1"/>
    <property type="match status" value="1"/>
</dbReference>
<dbReference type="PROSITE" id="PS50020">
    <property type="entry name" value="WW_DOMAIN_2"/>
    <property type="match status" value="1"/>
</dbReference>
<dbReference type="PROSITE" id="PS01357">
    <property type="entry name" value="ZF_ZZ_1"/>
    <property type="match status" value="1"/>
</dbReference>
<dbReference type="PROSITE" id="PS50135">
    <property type="entry name" value="ZF_ZZ_2"/>
    <property type="match status" value="1"/>
</dbReference>
<reference key="1">
    <citation type="journal article" date="1996" name="Nat. Genet.">
        <title>Characterization of DRP2, a novel human dystrophin homologue.</title>
        <authorList>
            <person name="Roberts R.G."/>
            <person name="Freeman T.C."/>
            <person name="Kendall E."/>
            <person name="Vetrie D.L.P."/>
            <person name="Dixon A.K."/>
            <person name="Shaw-Smith C."/>
            <person name="Bone Q."/>
            <person name="Bobrow M."/>
        </authorList>
    </citation>
    <scope>NUCLEOTIDE SEQUENCE [MRNA] (ISOFORM 1)</scope>
    <scope>TISSUE SPECIFICITY</scope>
    <source>
        <tissue>T-cell</tissue>
    </source>
</reference>
<reference key="2">
    <citation type="journal article" date="2004" name="Nat. Genet.">
        <title>Complete sequencing and characterization of 21,243 full-length human cDNAs.</title>
        <authorList>
            <person name="Ota T."/>
            <person name="Suzuki Y."/>
            <person name="Nishikawa T."/>
            <person name="Otsuki T."/>
            <person name="Sugiyama T."/>
            <person name="Irie R."/>
            <person name="Wakamatsu A."/>
            <person name="Hayashi K."/>
            <person name="Sato H."/>
            <person name="Nagai K."/>
            <person name="Kimura K."/>
            <person name="Makita H."/>
            <person name="Sekine M."/>
            <person name="Obayashi M."/>
            <person name="Nishi T."/>
            <person name="Shibahara T."/>
            <person name="Tanaka T."/>
            <person name="Ishii S."/>
            <person name="Yamamoto J."/>
            <person name="Saito K."/>
            <person name="Kawai Y."/>
            <person name="Isono Y."/>
            <person name="Nakamura Y."/>
            <person name="Nagahari K."/>
            <person name="Murakami K."/>
            <person name="Yasuda T."/>
            <person name="Iwayanagi T."/>
            <person name="Wagatsuma M."/>
            <person name="Shiratori A."/>
            <person name="Sudo H."/>
            <person name="Hosoiri T."/>
            <person name="Kaku Y."/>
            <person name="Kodaira H."/>
            <person name="Kondo H."/>
            <person name="Sugawara M."/>
            <person name="Takahashi M."/>
            <person name="Kanda K."/>
            <person name="Yokoi T."/>
            <person name="Furuya T."/>
            <person name="Kikkawa E."/>
            <person name="Omura Y."/>
            <person name="Abe K."/>
            <person name="Kamihara K."/>
            <person name="Katsuta N."/>
            <person name="Sato K."/>
            <person name="Tanikawa M."/>
            <person name="Yamazaki M."/>
            <person name="Ninomiya K."/>
            <person name="Ishibashi T."/>
            <person name="Yamashita H."/>
            <person name="Murakawa K."/>
            <person name="Fujimori K."/>
            <person name="Tanai H."/>
            <person name="Kimata M."/>
            <person name="Watanabe M."/>
            <person name="Hiraoka S."/>
            <person name="Chiba Y."/>
            <person name="Ishida S."/>
            <person name="Ono Y."/>
            <person name="Takiguchi S."/>
            <person name="Watanabe S."/>
            <person name="Yosida M."/>
            <person name="Hotuta T."/>
            <person name="Kusano J."/>
            <person name="Kanehori K."/>
            <person name="Takahashi-Fujii A."/>
            <person name="Hara H."/>
            <person name="Tanase T.-O."/>
            <person name="Nomura Y."/>
            <person name="Togiya S."/>
            <person name="Komai F."/>
            <person name="Hara R."/>
            <person name="Takeuchi K."/>
            <person name="Arita M."/>
            <person name="Imose N."/>
            <person name="Musashino K."/>
            <person name="Yuuki H."/>
            <person name="Oshima A."/>
            <person name="Sasaki N."/>
            <person name="Aotsuka S."/>
            <person name="Yoshikawa Y."/>
            <person name="Matsunawa H."/>
            <person name="Ichihara T."/>
            <person name="Shiohata N."/>
            <person name="Sano S."/>
            <person name="Moriya S."/>
            <person name="Momiyama H."/>
            <person name="Satoh N."/>
            <person name="Takami S."/>
            <person name="Terashima Y."/>
            <person name="Suzuki O."/>
            <person name="Nakagawa S."/>
            <person name="Senoh A."/>
            <person name="Mizoguchi H."/>
            <person name="Goto Y."/>
            <person name="Shimizu F."/>
            <person name="Wakebe H."/>
            <person name="Hishigaki H."/>
            <person name="Watanabe T."/>
            <person name="Sugiyama A."/>
            <person name="Takemoto M."/>
            <person name="Kawakami B."/>
            <person name="Yamazaki M."/>
            <person name="Watanabe K."/>
            <person name="Kumagai A."/>
            <person name="Itakura S."/>
            <person name="Fukuzumi Y."/>
            <person name="Fujimori Y."/>
            <person name="Komiyama M."/>
            <person name="Tashiro H."/>
            <person name="Tanigami A."/>
            <person name="Fujiwara T."/>
            <person name="Ono T."/>
            <person name="Yamada K."/>
            <person name="Fujii Y."/>
            <person name="Ozaki K."/>
            <person name="Hirao M."/>
            <person name="Ohmori Y."/>
            <person name="Kawabata A."/>
            <person name="Hikiji T."/>
            <person name="Kobatake N."/>
            <person name="Inagaki H."/>
            <person name="Ikema Y."/>
            <person name="Okamoto S."/>
            <person name="Okitani R."/>
            <person name="Kawakami T."/>
            <person name="Noguchi S."/>
            <person name="Itoh T."/>
            <person name="Shigeta K."/>
            <person name="Senba T."/>
            <person name="Matsumura K."/>
            <person name="Nakajima Y."/>
            <person name="Mizuno T."/>
            <person name="Morinaga M."/>
            <person name="Sasaki M."/>
            <person name="Togashi T."/>
            <person name="Oyama M."/>
            <person name="Hata H."/>
            <person name="Watanabe M."/>
            <person name="Komatsu T."/>
            <person name="Mizushima-Sugano J."/>
            <person name="Satoh T."/>
            <person name="Shirai Y."/>
            <person name="Takahashi Y."/>
            <person name="Nakagawa K."/>
            <person name="Okumura K."/>
            <person name="Nagase T."/>
            <person name="Nomura N."/>
            <person name="Kikuchi H."/>
            <person name="Masuho Y."/>
            <person name="Yamashita R."/>
            <person name="Nakai K."/>
            <person name="Yada T."/>
            <person name="Nakamura Y."/>
            <person name="Ohara O."/>
            <person name="Isogai T."/>
            <person name="Sugano S."/>
        </authorList>
    </citation>
    <scope>NUCLEOTIDE SEQUENCE [LARGE SCALE MRNA] (ISOFORMS 1 AND 2)</scope>
    <source>
        <tissue>Brain</tissue>
    </source>
</reference>
<reference key="3">
    <citation type="journal article" date="2005" name="Nature">
        <title>The DNA sequence of the human X chromosome.</title>
        <authorList>
            <person name="Ross M.T."/>
            <person name="Grafham D.V."/>
            <person name="Coffey A.J."/>
            <person name="Scherer S."/>
            <person name="McLay K."/>
            <person name="Muzny D."/>
            <person name="Platzer M."/>
            <person name="Howell G.R."/>
            <person name="Burrows C."/>
            <person name="Bird C.P."/>
            <person name="Frankish A."/>
            <person name="Lovell F.L."/>
            <person name="Howe K.L."/>
            <person name="Ashurst J.L."/>
            <person name="Fulton R.S."/>
            <person name="Sudbrak R."/>
            <person name="Wen G."/>
            <person name="Jones M.C."/>
            <person name="Hurles M.E."/>
            <person name="Andrews T.D."/>
            <person name="Scott C.E."/>
            <person name="Searle S."/>
            <person name="Ramser J."/>
            <person name="Whittaker A."/>
            <person name="Deadman R."/>
            <person name="Carter N.P."/>
            <person name="Hunt S.E."/>
            <person name="Chen R."/>
            <person name="Cree A."/>
            <person name="Gunaratne P."/>
            <person name="Havlak P."/>
            <person name="Hodgson A."/>
            <person name="Metzker M.L."/>
            <person name="Richards S."/>
            <person name="Scott G."/>
            <person name="Steffen D."/>
            <person name="Sodergren E."/>
            <person name="Wheeler D.A."/>
            <person name="Worley K.C."/>
            <person name="Ainscough R."/>
            <person name="Ambrose K.D."/>
            <person name="Ansari-Lari M.A."/>
            <person name="Aradhya S."/>
            <person name="Ashwell R.I."/>
            <person name="Babbage A.K."/>
            <person name="Bagguley C.L."/>
            <person name="Ballabio A."/>
            <person name="Banerjee R."/>
            <person name="Barker G.E."/>
            <person name="Barlow K.F."/>
            <person name="Barrett I.P."/>
            <person name="Bates K.N."/>
            <person name="Beare D.M."/>
            <person name="Beasley H."/>
            <person name="Beasley O."/>
            <person name="Beck A."/>
            <person name="Bethel G."/>
            <person name="Blechschmidt K."/>
            <person name="Brady N."/>
            <person name="Bray-Allen S."/>
            <person name="Bridgeman A.M."/>
            <person name="Brown A.J."/>
            <person name="Brown M.J."/>
            <person name="Bonnin D."/>
            <person name="Bruford E.A."/>
            <person name="Buhay C."/>
            <person name="Burch P."/>
            <person name="Burford D."/>
            <person name="Burgess J."/>
            <person name="Burrill W."/>
            <person name="Burton J."/>
            <person name="Bye J.M."/>
            <person name="Carder C."/>
            <person name="Carrel L."/>
            <person name="Chako J."/>
            <person name="Chapman J.C."/>
            <person name="Chavez D."/>
            <person name="Chen E."/>
            <person name="Chen G."/>
            <person name="Chen Y."/>
            <person name="Chen Z."/>
            <person name="Chinault C."/>
            <person name="Ciccodicola A."/>
            <person name="Clark S.Y."/>
            <person name="Clarke G."/>
            <person name="Clee C.M."/>
            <person name="Clegg S."/>
            <person name="Clerc-Blankenburg K."/>
            <person name="Clifford K."/>
            <person name="Cobley V."/>
            <person name="Cole C.G."/>
            <person name="Conquer J.S."/>
            <person name="Corby N."/>
            <person name="Connor R.E."/>
            <person name="David R."/>
            <person name="Davies J."/>
            <person name="Davis C."/>
            <person name="Davis J."/>
            <person name="Delgado O."/>
            <person name="Deshazo D."/>
            <person name="Dhami P."/>
            <person name="Ding Y."/>
            <person name="Dinh H."/>
            <person name="Dodsworth S."/>
            <person name="Draper H."/>
            <person name="Dugan-Rocha S."/>
            <person name="Dunham A."/>
            <person name="Dunn M."/>
            <person name="Durbin K.J."/>
            <person name="Dutta I."/>
            <person name="Eades T."/>
            <person name="Ellwood M."/>
            <person name="Emery-Cohen A."/>
            <person name="Errington H."/>
            <person name="Evans K.L."/>
            <person name="Faulkner L."/>
            <person name="Francis F."/>
            <person name="Frankland J."/>
            <person name="Fraser A.E."/>
            <person name="Galgoczy P."/>
            <person name="Gilbert J."/>
            <person name="Gill R."/>
            <person name="Gloeckner G."/>
            <person name="Gregory S.G."/>
            <person name="Gribble S."/>
            <person name="Griffiths C."/>
            <person name="Grocock R."/>
            <person name="Gu Y."/>
            <person name="Gwilliam R."/>
            <person name="Hamilton C."/>
            <person name="Hart E.A."/>
            <person name="Hawes A."/>
            <person name="Heath P.D."/>
            <person name="Heitmann K."/>
            <person name="Hennig S."/>
            <person name="Hernandez J."/>
            <person name="Hinzmann B."/>
            <person name="Ho S."/>
            <person name="Hoffs M."/>
            <person name="Howden P.J."/>
            <person name="Huckle E.J."/>
            <person name="Hume J."/>
            <person name="Hunt P.J."/>
            <person name="Hunt A.R."/>
            <person name="Isherwood J."/>
            <person name="Jacob L."/>
            <person name="Johnson D."/>
            <person name="Jones S."/>
            <person name="de Jong P.J."/>
            <person name="Joseph S.S."/>
            <person name="Keenan S."/>
            <person name="Kelly S."/>
            <person name="Kershaw J.K."/>
            <person name="Khan Z."/>
            <person name="Kioschis P."/>
            <person name="Klages S."/>
            <person name="Knights A.J."/>
            <person name="Kosiura A."/>
            <person name="Kovar-Smith C."/>
            <person name="Laird G.K."/>
            <person name="Langford C."/>
            <person name="Lawlor S."/>
            <person name="Leversha M."/>
            <person name="Lewis L."/>
            <person name="Liu W."/>
            <person name="Lloyd C."/>
            <person name="Lloyd D.M."/>
            <person name="Loulseged H."/>
            <person name="Loveland J.E."/>
            <person name="Lovell J.D."/>
            <person name="Lozado R."/>
            <person name="Lu J."/>
            <person name="Lyne R."/>
            <person name="Ma J."/>
            <person name="Maheshwari M."/>
            <person name="Matthews L.H."/>
            <person name="McDowall J."/>
            <person name="McLaren S."/>
            <person name="McMurray A."/>
            <person name="Meidl P."/>
            <person name="Meitinger T."/>
            <person name="Milne S."/>
            <person name="Miner G."/>
            <person name="Mistry S.L."/>
            <person name="Morgan M."/>
            <person name="Morris S."/>
            <person name="Mueller I."/>
            <person name="Mullikin J.C."/>
            <person name="Nguyen N."/>
            <person name="Nordsiek G."/>
            <person name="Nyakatura G."/>
            <person name="O'dell C.N."/>
            <person name="Okwuonu G."/>
            <person name="Palmer S."/>
            <person name="Pandian R."/>
            <person name="Parker D."/>
            <person name="Parrish J."/>
            <person name="Pasternak S."/>
            <person name="Patel D."/>
            <person name="Pearce A.V."/>
            <person name="Pearson D.M."/>
            <person name="Pelan S.E."/>
            <person name="Perez L."/>
            <person name="Porter K.M."/>
            <person name="Ramsey Y."/>
            <person name="Reichwald K."/>
            <person name="Rhodes S."/>
            <person name="Ridler K.A."/>
            <person name="Schlessinger D."/>
            <person name="Schueler M.G."/>
            <person name="Sehra H.K."/>
            <person name="Shaw-Smith C."/>
            <person name="Shen H."/>
            <person name="Sheridan E.M."/>
            <person name="Shownkeen R."/>
            <person name="Skuce C.D."/>
            <person name="Smith M.L."/>
            <person name="Sotheran E.C."/>
            <person name="Steingruber H.E."/>
            <person name="Steward C.A."/>
            <person name="Storey R."/>
            <person name="Swann R.M."/>
            <person name="Swarbreck D."/>
            <person name="Tabor P.E."/>
            <person name="Taudien S."/>
            <person name="Taylor T."/>
            <person name="Teague B."/>
            <person name="Thomas K."/>
            <person name="Thorpe A."/>
            <person name="Timms K."/>
            <person name="Tracey A."/>
            <person name="Trevanion S."/>
            <person name="Tromans A.C."/>
            <person name="d'Urso M."/>
            <person name="Verduzco D."/>
            <person name="Villasana D."/>
            <person name="Waldron L."/>
            <person name="Wall M."/>
            <person name="Wang Q."/>
            <person name="Warren J."/>
            <person name="Warry G.L."/>
            <person name="Wei X."/>
            <person name="West A."/>
            <person name="Whitehead S.L."/>
            <person name="Whiteley M.N."/>
            <person name="Wilkinson J.E."/>
            <person name="Willey D.L."/>
            <person name="Williams G."/>
            <person name="Williams L."/>
            <person name="Williamson A."/>
            <person name="Williamson H."/>
            <person name="Wilming L."/>
            <person name="Woodmansey R.L."/>
            <person name="Wray P.W."/>
            <person name="Yen J."/>
            <person name="Zhang J."/>
            <person name="Zhou J."/>
            <person name="Zoghbi H."/>
            <person name="Zorilla S."/>
            <person name="Buck D."/>
            <person name="Reinhardt R."/>
            <person name="Poustka A."/>
            <person name="Rosenthal A."/>
            <person name="Lehrach H."/>
            <person name="Meindl A."/>
            <person name="Minx P.J."/>
            <person name="Hillier L.W."/>
            <person name="Willard H.F."/>
            <person name="Wilson R.K."/>
            <person name="Waterston R.H."/>
            <person name="Rice C.M."/>
            <person name="Vaudin M."/>
            <person name="Coulson A."/>
            <person name="Nelson D.L."/>
            <person name="Weinstock G."/>
            <person name="Sulston J.E."/>
            <person name="Durbin R.M."/>
            <person name="Hubbard T."/>
            <person name="Gibbs R.A."/>
            <person name="Beck S."/>
            <person name="Rogers J."/>
            <person name="Bentley D.R."/>
        </authorList>
    </citation>
    <scope>NUCLEOTIDE SEQUENCE [LARGE SCALE GENOMIC DNA]</scope>
</reference>
<reference key="4">
    <citation type="submission" date="2005-07" db="EMBL/GenBank/DDBJ databases">
        <authorList>
            <person name="Mural R.J."/>
            <person name="Istrail S."/>
            <person name="Sutton G.G."/>
            <person name="Florea L."/>
            <person name="Halpern A.L."/>
            <person name="Mobarry C.M."/>
            <person name="Lippert R."/>
            <person name="Walenz B."/>
            <person name="Shatkay H."/>
            <person name="Dew I."/>
            <person name="Miller J.R."/>
            <person name="Flanigan M.J."/>
            <person name="Edwards N.J."/>
            <person name="Bolanos R."/>
            <person name="Fasulo D."/>
            <person name="Halldorsson B.V."/>
            <person name="Hannenhalli S."/>
            <person name="Turner R."/>
            <person name="Yooseph S."/>
            <person name="Lu F."/>
            <person name="Nusskern D.R."/>
            <person name="Shue B.C."/>
            <person name="Zheng X.H."/>
            <person name="Zhong F."/>
            <person name="Delcher A.L."/>
            <person name="Huson D.H."/>
            <person name="Kravitz S.A."/>
            <person name="Mouchard L."/>
            <person name="Reinert K."/>
            <person name="Remington K.A."/>
            <person name="Clark A.G."/>
            <person name="Waterman M.S."/>
            <person name="Eichler E.E."/>
            <person name="Adams M.D."/>
            <person name="Hunkapiller M.W."/>
            <person name="Myers E.W."/>
            <person name="Venter J.C."/>
        </authorList>
    </citation>
    <scope>NUCLEOTIDE SEQUENCE [LARGE SCALE GENOMIC DNA]</scope>
</reference>
<reference key="5">
    <citation type="journal article" date="2004" name="Genome Res.">
        <title>The status, quality, and expansion of the NIH full-length cDNA project: the Mammalian Gene Collection (MGC).</title>
        <authorList>
            <consortium name="The MGC Project Team"/>
        </authorList>
    </citation>
    <scope>NUCLEOTIDE SEQUENCE [LARGE SCALE MRNA] (ISOFORM 1)</scope>
</reference>
<gene>
    <name type="primary">DRP2</name>
</gene>
<feature type="chain" id="PRO_0000076083" description="Dystrophin-related protein 2">
    <location>
        <begin position="1"/>
        <end position="957"/>
    </location>
</feature>
<feature type="repeat" description="Spectrin 1">
    <location>
        <begin position="102"/>
        <end position="179"/>
    </location>
</feature>
<feature type="repeat" description="Spectrin 2">
    <location>
        <begin position="231"/>
        <end position="337"/>
    </location>
</feature>
<feature type="domain" description="WW" evidence="4">
    <location>
        <begin position="358"/>
        <end position="383"/>
    </location>
</feature>
<feature type="zinc finger region" description="ZZ-type; degenerate" evidence="5">
    <location>
        <begin position="605"/>
        <end position="661"/>
    </location>
</feature>
<feature type="region of interest" description="Disordered" evidence="6">
    <location>
        <begin position="877"/>
        <end position="923"/>
    </location>
</feature>
<feature type="compositionally biased region" description="Low complexity" evidence="6">
    <location>
        <begin position="877"/>
        <end position="900"/>
    </location>
</feature>
<feature type="binding site" evidence="5">
    <location>
        <position position="610"/>
    </location>
    <ligand>
        <name>Zn(2+)</name>
        <dbReference type="ChEBI" id="CHEBI:29105"/>
    </ligand>
</feature>
<feature type="binding site" evidence="5">
    <location>
        <position position="613"/>
    </location>
    <ligand>
        <name>Zn(2+)</name>
        <dbReference type="ChEBI" id="CHEBI:29105"/>
    </ligand>
</feature>
<feature type="binding site" evidence="5">
    <location>
        <position position="634"/>
    </location>
    <ligand>
        <name>Zn(2+)</name>
        <dbReference type="ChEBI" id="CHEBI:29105"/>
    </ligand>
</feature>
<feature type="binding site" evidence="5">
    <location>
        <position position="637"/>
    </location>
    <ligand>
        <name>Zn(2+)</name>
        <dbReference type="ChEBI" id="CHEBI:29105"/>
    </ligand>
</feature>
<feature type="modified residue" description="Phosphoserine" evidence="2">
    <location>
        <position position="748"/>
    </location>
</feature>
<feature type="modified residue" description="Phosphothreonine" evidence="2">
    <location>
        <position position="910"/>
    </location>
</feature>
<feature type="splice variant" id="VSP_042662" description="In isoform 2." evidence="8">
    <location>
        <begin position="1"/>
        <end position="78"/>
    </location>
</feature>
<feature type="sequence variant" id="VAR_033898" description="In dbSNP:rs7066252.">
    <original>V</original>
    <variation>L</variation>
    <location>
        <position position="68"/>
    </location>
</feature>
<feature type="sequence conflict" description="In Ref. 2; BAF82514." evidence="9" ref="2">
    <original>P</original>
    <variation>L</variation>
    <location>
        <position position="73"/>
    </location>
</feature>
<feature type="sequence conflict" description="In Ref. 1; AAC50538." evidence="9" ref="1">
    <original>G</original>
    <variation>A</variation>
    <location>
        <position position="156"/>
    </location>
</feature>
<feature type="sequence conflict" description="In Ref. 2; BAF82514." evidence="9" ref="2">
    <original>E</original>
    <variation>G</variation>
    <location>
        <position position="251"/>
    </location>
</feature>
<feature type="sequence conflict" description="In Ref. 1; AAC50538." evidence="9" ref="1">
    <original>S</original>
    <variation>D</variation>
    <location>
        <position position="329"/>
    </location>
</feature>
<feature type="sequence conflict" description="In Ref. 1; AAC50538." evidence="9" ref="1">
    <original>A</original>
    <variation>P</variation>
    <location>
        <position position="593"/>
    </location>
</feature>
<proteinExistence type="evidence at protein level"/>
<keyword id="KW-0025">Alternative splicing</keyword>
<keyword id="KW-1003">Cell membrane</keyword>
<keyword id="KW-0966">Cell projection</keyword>
<keyword id="KW-0472">Membrane</keyword>
<keyword id="KW-0479">Metal-binding</keyword>
<keyword id="KW-0597">Phosphoprotein</keyword>
<keyword id="KW-1267">Proteomics identification</keyword>
<keyword id="KW-1185">Reference proteome</keyword>
<keyword id="KW-0677">Repeat</keyword>
<keyword id="KW-0770">Synapse</keyword>
<keyword id="KW-0862">Zinc</keyword>
<keyword id="KW-0863">Zinc-finger</keyword>
<organism>
    <name type="scientific">Homo sapiens</name>
    <name type="common">Human</name>
    <dbReference type="NCBI Taxonomy" id="9606"/>
    <lineage>
        <taxon>Eukaryota</taxon>
        <taxon>Metazoa</taxon>
        <taxon>Chordata</taxon>
        <taxon>Craniata</taxon>
        <taxon>Vertebrata</taxon>
        <taxon>Euteleostomi</taxon>
        <taxon>Mammalia</taxon>
        <taxon>Eutheria</taxon>
        <taxon>Euarchontoglires</taxon>
        <taxon>Primates</taxon>
        <taxon>Haplorrhini</taxon>
        <taxon>Catarrhini</taxon>
        <taxon>Hominidae</taxon>
        <taxon>Homo</taxon>
    </lineage>
</organism>
<protein>
    <recommendedName>
        <fullName>Dystrophin-related protein 2</fullName>
        <shortName>DRP-2</shortName>
    </recommendedName>
</protein>
<name>DRP2_HUMAN</name>